<organism>
    <name type="scientific">Brucella canis (strain ATCC 23365 / NCTC 10854 / RM-666)</name>
    <dbReference type="NCBI Taxonomy" id="483179"/>
    <lineage>
        <taxon>Bacteria</taxon>
        <taxon>Pseudomonadati</taxon>
        <taxon>Pseudomonadota</taxon>
        <taxon>Alphaproteobacteria</taxon>
        <taxon>Hyphomicrobiales</taxon>
        <taxon>Brucellaceae</taxon>
        <taxon>Brucella/Ochrobactrum group</taxon>
        <taxon>Brucella</taxon>
    </lineage>
</organism>
<sequence length="237" mass="25052">MKITWLGHAAFRVETAKAVILIDPFLNGNPGAKGIDFKGATRGVTHIALTHGHGDHVGDTVAIAREHGATVIANADLASWLGSQGVEKLDPGNTGGTLAHEGFTITFVNALHSSAMLTENGVSQALGNPNGLVFHFEDSPTLYHMGDTDIFSDMALINELHQPEIGIVPIGDRFTMGGAVAALACQRYFNFNSVLPCHYASFPIIDRTADKFIAGMADHPATKVLADPAGTVHSFQA</sequence>
<gene>
    <name type="ordered locus">BCAN_B0597</name>
</gene>
<protein>
    <recommendedName>
        <fullName evidence="1">UPF0173 metal-dependent hydrolase BCAN_B0597</fullName>
    </recommendedName>
</protein>
<proteinExistence type="inferred from homology"/>
<dbReference type="EMBL" id="CP000873">
    <property type="protein sequence ID" value="ABX63773.1"/>
    <property type="molecule type" value="Genomic_DNA"/>
</dbReference>
<dbReference type="RefSeq" id="WP_006133812.1">
    <property type="nucleotide sequence ID" value="NC_010104.1"/>
</dbReference>
<dbReference type="SMR" id="A9MBN6"/>
<dbReference type="GeneID" id="55592267"/>
<dbReference type="KEGG" id="bcs:BCAN_B0597"/>
<dbReference type="HOGENOM" id="CLU_070010_4_0_5"/>
<dbReference type="PhylomeDB" id="A9MBN6"/>
<dbReference type="Proteomes" id="UP000001385">
    <property type="component" value="Chromosome II"/>
</dbReference>
<dbReference type="GO" id="GO:0016787">
    <property type="term" value="F:hydrolase activity"/>
    <property type="evidence" value="ECO:0007669"/>
    <property type="project" value="UniProtKB-UniRule"/>
</dbReference>
<dbReference type="CDD" id="cd06262">
    <property type="entry name" value="metallo-hydrolase-like_MBL-fold"/>
    <property type="match status" value="1"/>
</dbReference>
<dbReference type="Gene3D" id="3.60.15.10">
    <property type="entry name" value="Ribonuclease Z/Hydroxyacylglutathione hydrolase-like"/>
    <property type="match status" value="1"/>
</dbReference>
<dbReference type="HAMAP" id="MF_00457">
    <property type="entry name" value="UPF0173"/>
    <property type="match status" value="1"/>
</dbReference>
<dbReference type="InterPro" id="IPR001279">
    <property type="entry name" value="Metallo-B-lactamas"/>
</dbReference>
<dbReference type="InterPro" id="IPR036866">
    <property type="entry name" value="RibonucZ/Hydroxyglut_hydro"/>
</dbReference>
<dbReference type="InterPro" id="IPR022877">
    <property type="entry name" value="UPF0173"/>
</dbReference>
<dbReference type="InterPro" id="IPR050114">
    <property type="entry name" value="UPF0173_UPF0282_UlaG_hydrolase"/>
</dbReference>
<dbReference type="NCBIfam" id="NF001911">
    <property type="entry name" value="PRK00685.1"/>
    <property type="match status" value="1"/>
</dbReference>
<dbReference type="PANTHER" id="PTHR43546:SF3">
    <property type="entry name" value="UPF0173 METAL-DEPENDENT HYDROLASE MJ1163"/>
    <property type="match status" value="1"/>
</dbReference>
<dbReference type="PANTHER" id="PTHR43546">
    <property type="entry name" value="UPF0173 METAL-DEPENDENT HYDROLASE MJ1163-RELATED"/>
    <property type="match status" value="1"/>
</dbReference>
<dbReference type="Pfam" id="PF13483">
    <property type="entry name" value="Lactamase_B_3"/>
    <property type="match status" value="1"/>
</dbReference>
<dbReference type="SMART" id="SM00849">
    <property type="entry name" value="Lactamase_B"/>
    <property type="match status" value="1"/>
</dbReference>
<dbReference type="SUPFAM" id="SSF56281">
    <property type="entry name" value="Metallo-hydrolase/oxidoreductase"/>
    <property type="match status" value="1"/>
</dbReference>
<comment type="similarity">
    <text evidence="1">Belongs to the UPF0173 family.</text>
</comment>
<name>Y3097_BRUC2</name>
<reference key="1">
    <citation type="submission" date="2007-10" db="EMBL/GenBank/DDBJ databases">
        <title>Brucella canis ATCC 23365 whole genome shotgun sequencing project.</title>
        <authorList>
            <person name="Setubal J.C."/>
            <person name="Bowns C."/>
            <person name="Boyle S."/>
            <person name="Crasta O.R."/>
            <person name="Czar M.J."/>
            <person name="Dharmanolla C."/>
            <person name="Gillespie J.J."/>
            <person name="Kenyon R.W."/>
            <person name="Lu J."/>
            <person name="Mane S."/>
            <person name="Mohapatra S."/>
            <person name="Nagrani S."/>
            <person name="Purkayastha A."/>
            <person name="Rajasimha H.K."/>
            <person name="Shallom J.M."/>
            <person name="Shallom S."/>
            <person name="Shukla M."/>
            <person name="Snyder E.E."/>
            <person name="Sobral B.W."/>
            <person name="Wattam A.R."/>
            <person name="Will R."/>
            <person name="Williams K."/>
            <person name="Yoo H."/>
            <person name="Bruce D."/>
            <person name="Detter C."/>
            <person name="Munk C."/>
            <person name="Brettin T.S."/>
        </authorList>
    </citation>
    <scope>NUCLEOTIDE SEQUENCE [LARGE SCALE GENOMIC DNA]</scope>
    <source>
        <strain>ATCC 23365 / NCTC 10854 / RM-666</strain>
    </source>
</reference>
<feature type="chain" id="PRO_0000367166" description="UPF0173 metal-dependent hydrolase BCAN_B0597">
    <location>
        <begin position="1"/>
        <end position="237"/>
    </location>
</feature>
<evidence type="ECO:0000255" key="1">
    <source>
        <dbReference type="HAMAP-Rule" id="MF_00457"/>
    </source>
</evidence>
<keyword id="KW-0378">Hydrolase</keyword>
<keyword id="KW-1185">Reference proteome</keyword>
<accession>A9MBN6</accession>